<protein>
    <recommendedName>
        <fullName>Protein 9b</fullName>
    </recommendedName>
    <alternativeName>
        <fullName>Accessory protein 9b</fullName>
    </alternativeName>
    <alternativeName>
        <fullName>ORF-9b</fullName>
    </alternativeName>
</protein>
<dbReference type="EMBL" id="DQ648857">
    <property type="status" value="NOT_ANNOTATED_CDS"/>
    <property type="molecule type" value="Genomic_RNA"/>
</dbReference>
<dbReference type="SMR" id="P0C5A6"/>
<dbReference type="Proteomes" id="UP000006573">
    <property type="component" value="Genome"/>
</dbReference>
<dbReference type="GO" id="GO:0044162">
    <property type="term" value="C:host cell cytoplasmic vesicle membrane"/>
    <property type="evidence" value="ECO:0007669"/>
    <property type="project" value="UniProtKB-SubCell"/>
</dbReference>
<dbReference type="GO" id="GO:0016020">
    <property type="term" value="C:membrane"/>
    <property type="evidence" value="ECO:0007669"/>
    <property type="project" value="UniProtKB-KW"/>
</dbReference>
<dbReference type="CDD" id="cd21955">
    <property type="entry name" value="SARS-CoV_ORF9b"/>
    <property type="match status" value="1"/>
</dbReference>
<dbReference type="InterPro" id="IPR018542">
    <property type="entry name" value="Protein_9b_Betacoronavirus"/>
</dbReference>
<dbReference type="InterPro" id="IPR037223">
    <property type="entry name" value="Protein_9b_SARS"/>
</dbReference>
<dbReference type="Pfam" id="PF09399">
    <property type="entry name" value="bCoV_lipid_BD"/>
    <property type="match status" value="1"/>
</dbReference>
<dbReference type="SUPFAM" id="SSF141666">
    <property type="entry name" value="SARS ORF9b-like"/>
    <property type="match status" value="1"/>
</dbReference>
<dbReference type="PROSITE" id="PS51920">
    <property type="entry name" value="SARS_9B"/>
    <property type="match status" value="1"/>
</dbReference>
<comment type="subunit">
    <text evidence="1">Homodimer.</text>
</comment>
<comment type="subcellular location">
    <subcellularLocation>
        <location>Host cytoplasmic vesicle membrane</location>
        <topology>Peripheral membrane protein</topology>
    </subcellularLocation>
    <subcellularLocation>
        <location>Host cytoplasm</location>
    </subcellularLocation>
    <text evidence="1">Binds non-covalently to intracellular lipid bilayers.</text>
</comment>
<comment type="miscellaneous">
    <text>The gene encoding this protein is included within the N gene (alternative ORF).</text>
</comment>
<comment type="miscellaneous">
    <text>Bat coronavirus 279/2005 is highly similar to SARS-CoV (SARS-like).</text>
</comment>
<feature type="chain" id="PRO_0000296313" description="Protein 9b">
    <location>
        <begin position="1"/>
        <end position="97"/>
    </location>
</feature>
<feature type="domain" description="9b" evidence="2">
    <location>
        <begin position="8"/>
        <end position="97"/>
    </location>
</feature>
<keyword id="KW-1035">Host cytoplasm</keyword>
<keyword id="KW-1036">Host cytoplasmic vesicle</keyword>
<keyword id="KW-1043">Host membrane</keyword>
<keyword id="KW-0472">Membrane</keyword>
<evidence type="ECO:0000250" key="1"/>
<evidence type="ECO:0000255" key="2">
    <source>
        <dbReference type="PROSITE-ProRule" id="PRU01268"/>
    </source>
</evidence>
<proteinExistence type="inferred from homology"/>
<name>ORF9B_BC279</name>
<accession>P0C5A6</accession>
<sequence length="97" mass="10677">MDPKTSVVPPALHLVDPQIQLTIIRMEDAVVHGQSNAVPKVYPIILRLGSQLSLSMARRNLDSLEARAFQSTPIVVKMTKLATTEELPDEFVVVTAK</sequence>
<organism>
    <name type="scientific">Bat coronavirus 279/2005</name>
    <name type="common">BtCoV</name>
    <name type="synonym">BtCoV/279/2005</name>
    <dbReference type="NCBI Taxonomy" id="389167"/>
    <lineage>
        <taxon>Viruses</taxon>
        <taxon>Riboviria</taxon>
        <taxon>Orthornavirae</taxon>
        <taxon>Pisuviricota</taxon>
        <taxon>Pisoniviricetes</taxon>
        <taxon>Nidovirales</taxon>
        <taxon>Cornidovirineae</taxon>
        <taxon>Coronaviridae</taxon>
        <taxon>Orthocoronavirinae</taxon>
        <taxon>Betacoronavirus</taxon>
        <taxon>Sarbecovirus</taxon>
        <taxon>Severe acute respiratory syndrome coronavirus</taxon>
    </lineage>
</organism>
<organismHost>
    <name type="scientific">Rhinolophus macrotis</name>
    <name type="common">Big-eared horseshoe bat</name>
    <dbReference type="NCBI Taxonomy" id="196889"/>
</organismHost>
<gene>
    <name type="ORF">9b</name>
</gene>
<reference key="1">
    <citation type="journal article" date="2006" name="J. Virol.">
        <title>Prevalence and genetic diversity of coronaviruses in bats from China.</title>
        <authorList>
            <person name="Tang X.C."/>
            <person name="Zhang J.X."/>
            <person name="Zhang S.Y."/>
            <person name="Wang P."/>
            <person name="Fan X.H."/>
            <person name="Li L.F."/>
            <person name="Li G."/>
            <person name="Dong B.Q."/>
            <person name="Liu W."/>
            <person name="Cheung C.L."/>
            <person name="Xu K.M."/>
            <person name="Song W.J."/>
            <person name="Vijaykrishna D."/>
            <person name="Poon L.L.M."/>
            <person name="Peiris J.S.M."/>
            <person name="Smith G.J."/>
            <person name="Chen H."/>
            <person name="Guan Y."/>
        </authorList>
    </citation>
    <scope>NUCLEOTIDE SEQUENCE [GENOMIC RNA]</scope>
</reference>